<evidence type="ECO:0000255" key="1">
    <source>
        <dbReference type="HAMAP-Rule" id="MF_00580"/>
    </source>
</evidence>
<evidence type="ECO:0000305" key="2"/>
<gene>
    <name evidence="1" type="primary">groES1</name>
    <name evidence="1" type="synonym">groS1</name>
    <name type="ordered locus">VC_2665</name>
</gene>
<protein>
    <recommendedName>
        <fullName evidence="1">Co-chaperonin GroES 1</fullName>
    </recommendedName>
    <alternativeName>
        <fullName evidence="1">10 kDa chaperonin 1</fullName>
    </alternativeName>
    <alternativeName>
        <fullName evidence="1">Chaperonin-10 1</fullName>
        <shortName evidence="1">Cpn10 1</shortName>
    </alternativeName>
</protein>
<keyword id="KW-0143">Chaperone</keyword>
<keyword id="KW-0963">Cytoplasm</keyword>
<keyword id="KW-1185">Reference proteome</keyword>
<comment type="function">
    <text evidence="1">Together with the chaperonin GroEL, plays an essential role in assisting protein folding. The GroEL-GroES system forms a nano-cage that allows encapsulation of the non-native substrate proteins and provides a physical environment optimized to promote and accelerate protein folding. GroES binds to the apical surface of the GroEL ring, thereby capping the opening of the GroEL channel.</text>
</comment>
<comment type="subunit">
    <text evidence="1">Heptamer of 7 subunits arranged in a ring. Interacts with the chaperonin GroEL.</text>
</comment>
<comment type="subcellular location">
    <subcellularLocation>
        <location evidence="1">Cytoplasm</location>
    </subcellularLocation>
</comment>
<comment type="similarity">
    <text evidence="1 2">Belongs to the GroES chaperonin family.</text>
</comment>
<organism>
    <name type="scientific">Vibrio cholerae serotype O1 (strain ATCC 39315 / El Tor Inaba N16961)</name>
    <dbReference type="NCBI Taxonomy" id="243277"/>
    <lineage>
        <taxon>Bacteria</taxon>
        <taxon>Pseudomonadati</taxon>
        <taxon>Pseudomonadota</taxon>
        <taxon>Gammaproteobacteria</taxon>
        <taxon>Vibrionales</taxon>
        <taxon>Vibrionaceae</taxon>
        <taxon>Vibrio</taxon>
    </lineage>
</organism>
<dbReference type="EMBL" id="AE003852">
    <property type="protein sequence ID" value="AAF95806.1"/>
    <property type="molecule type" value="Genomic_DNA"/>
</dbReference>
<dbReference type="PIR" id="C82048">
    <property type="entry name" value="C82048"/>
</dbReference>
<dbReference type="RefSeq" id="NP_232293.1">
    <property type="nucleotide sequence ID" value="NC_002505.1"/>
</dbReference>
<dbReference type="RefSeq" id="WP_001026274.1">
    <property type="nucleotide sequence ID" value="NZ_LT906614.1"/>
</dbReference>
<dbReference type="SMR" id="Q9KNR6"/>
<dbReference type="STRING" id="243277.VC_2665"/>
<dbReference type="DNASU" id="2615493"/>
<dbReference type="EnsemblBacteria" id="AAF95806">
    <property type="protein sequence ID" value="AAF95806"/>
    <property type="gene ID" value="VC_2665"/>
</dbReference>
<dbReference type="KEGG" id="vch:VC_2665"/>
<dbReference type="PATRIC" id="fig|243277.26.peg.2540"/>
<dbReference type="eggNOG" id="COG0234">
    <property type="taxonomic scope" value="Bacteria"/>
</dbReference>
<dbReference type="HOGENOM" id="CLU_132825_1_1_6"/>
<dbReference type="Proteomes" id="UP000000584">
    <property type="component" value="Chromosome 1"/>
</dbReference>
<dbReference type="GO" id="GO:0005737">
    <property type="term" value="C:cytoplasm"/>
    <property type="evidence" value="ECO:0007669"/>
    <property type="project" value="UniProtKB-SubCell"/>
</dbReference>
<dbReference type="GO" id="GO:0005524">
    <property type="term" value="F:ATP binding"/>
    <property type="evidence" value="ECO:0007669"/>
    <property type="project" value="InterPro"/>
</dbReference>
<dbReference type="GO" id="GO:0046872">
    <property type="term" value="F:metal ion binding"/>
    <property type="evidence" value="ECO:0000318"/>
    <property type="project" value="GO_Central"/>
</dbReference>
<dbReference type="GO" id="GO:0044183">
    <property type="term" value="F:protein folding chaperone"/>
    <property type="evidence" value="ECO:0007669"/>
    <property type="project" value="InterPro"/>
</dbReference>
<dbReference type="GO" id="GO:0051087">
    <property type="term" value="F:protein-folding chaperone binding"/>
    <property type="evidence" value="ECO:0000318"/>
    <property type="project" value="GO_Central"/>
</dbReference>
<dbReference type="GO" id="GO:0051082">
    <property type="term" value="F:unfolded protein binding"/>
    <property type="evidence" value="ECO:0000318"/>
    <property type="project" value="GO_Central"/>
</dbReference>
<dbReference type="GO" id="GO:0051085">
    <property type="term" value="P:chaperone cofactor-dependent protein refolding"/>
    <property type="evidence" value="ECO:0000318"/>
    <property type="project" value="GO_Central"/>
</dbReference>
<dbReference type="CDD" id="cd00320">
    <property type="entry name" value="cpn10"/>
    <property type="match status" value="1"/>
</dbReference>
<dbReference type="FunFam" id="2.30.33.40:FF:000001">
    <property type="entry name" value="10 kDa chaperonin"/>
    <property type="match status" value="1"/>
</dbReference>
<dbReference type="Gene3D" id="2.30.33.40">
    <property type="entry name" value="GroES chaperonin"/>
    <property type="match status" value="1"/>
</dbReference>
<dbReference type="HAMAP" id="MF_00580">
    <property type="entry name" value="CH10"/>
    <property type="match status" value="1"/>
</dbReference>
<dbReference type="InterPro" id="IPR020818">
    <property type="entry name" value="Chaperonin_GroES"/>
</dbReference>
<dbReference type="InterPro" id="IPR037124">
    <property type="entry name" value="Chaperonin_GroES_sf"/>
</dbReference>
<dbReference type="InterPro" id="IPR018369">
    <property type="entry name" value="Chaprnonin_Cpn10_CS"/>
</dbReference>
<dbReference type="InterPro" id="IPR011032">
    <property type="entry name" value="GroES-like_sf"/>
</dbReference>
<dbReference type="NCBIfam" id="NF001526">
    <property type="entry name" value="PRK00364.1-1"/>
    <property type="match status" value="1"/>
</dbReference>
<dbReference type="NCBIfam" id="NF001527">
    <property type="entry name" value="PRK00364.1-2"/>
    <property type="match status" value="1"/>
</dbReference>
<dbReference type="NCBIfam" id="NF001531">
    <property type="entry name" value="PRK00364.2-2"/>
    <property type="match status" value="1"/>
</dbReference>
<dbReference type="PANTHER" id="PTHR10772">
    <property type="entry name" value="10 KDA HEAT SHOCK PROTEIN"/>
    <property type="match status" value="1"/>
</dbReference>
<dbReference type="PANTHER" id="PTHR10772:SF58">
    <property type="entry name" value="CO-CHAPERONIN GROES"/>
    <property type="match status" value="1"/>
</dbReference>
<dbReference type="Pfam" id="PF00166">
    <property type="entry name" value="Cpn10"/>
    <property type="match status" value="1"/>
</dbReference>
<dbReference type="PRINTS" id="PR00297">
    <property type="entry name" value="CHAPERONIN10"/>
</dbReference>
<dbReference type="SMART" id="SM00883">
    <property type="entry name" value="Cpn10"/>
    <property type="match status" value="1"/>
</dbReference>
<dbReference type="SUPFAM" id="SSF50129">
    <property type="entry name" value="GroES-like"/>
    <property type="match status" value="1"/>
</dbReference>
<dbReference type="PROSITE" id="PS00681">
    <property type="entry name" value="CHAPERONINS_CPN10"/>
    <property type="match status" value="1"/>
</dbReference>
<proteinExistence type="inferred from homology"/>
<accession>Q9KNR6</accession>
<reference key="1">
    <citation type="journal article" date="2000" name="Nature">
        <title>DNA sequence of both chromosomes of the cholera pathogen Vibrio cholerae.</title>
        <authorList>
            <person name="Heidelberg J.F."/>
            <person name="Eisen J.A."/>
            <person name="Nelson W.C."/>
            <person name="Clayton R.A."/>
            <person name="Gwinn M.L."/>
            <person name="Dodson R.J."/>
            <person name="Haft D.H."/>
            <person name="Hickey E.K."/>
            <person name="Peterson J.D."/>
            <person name="Umayam L.A."/>
            <person name="Gill S.R."/>
            <person name="Nelson K.E."/>
            <person name="Read T.D."/>
            <person name="Tettelin H."/>
            <person name="Richardson D.L."/>
            <person name="Ermolaeva M.D."/>
            <person name="Vamathevan J.J."/>
            <person name="Bass S."/>
            <person name="Qin H."/>
            <person name="Dragoi I."/>
            <person name="Sellers P."/>
            <person name="McDonald L.A."/>
            <person name="Utterback T.R."/>
            <person name="Fleischmann R.D."/>
            <person name="Nierman W.C."/>
            <person name="White O."/>
            <person name="Salzberg S.L."/>
            <person name="Smith H.O."/>
            <person name="Colwell R.R."/>
            <person name="Mekalanos J.J."/>
            <person name="Venter J.C."/>
            <person name="Fraser C.M."/>
        </authorList>
    </citation>
    <scope>NUCLEOTIDE SEQUENCE [LARGE SCALE GENOMIC DNA]</scope>
    <source>
        <strain>ATCC 39315 / El Tor Inaba N16961</strain>
    </source>
</reference>
<sequence length="96" mass="10295">MNIRPLHDRVIVERQEVESKSAGGIVLTGSAAEKSTRGKVLAVGKGRILENGSVQPLDVKVGDTVIFAESYGTKTEKIDGKEVLILAEHDILAIVE</sequence>
<name>CH101_VIBCH</name>
<feature type="chain" id="PRO_0000174891" description="Co-chaperonin GroES 1">
    <location>
        <begin position="1"/>
        <end position="96"/>
    </location>
</feature>